<gene>
    <name type="primary">NCBP2</name>
    <name type="synonym">CBP20</name>
    <name type="ORF">RCJMB04_9i16</name>
</gene>
<sequence>MSGLLHTTLSGLNSDSYCEISRYRDQHFRGSKKLQEKFLKISSTLYVGNLSFYTTEEQIQELFSKCGDVKRIVMGLDKIKKTPCGFCFVEYYTRADAEHAMRFINGTRLDDRIVRTDWDAGFKEGRQYGRGKTGGQVRDEYRTDYDVGRGGFGKIIQMQKANQQPAVY</sequence>
<name>NCBP2_CHICK</name>
<keyword id="KW-0963">Cytoplasm</keyword>
<keyword id="KW-0507">mRNA processing</keyword>
<keyword id="KW-0508">mRNA splicing</keyword>
<keyword id="KW-0509">mRNA transport</keyword>
<keyword id="KW-0866">Nonsense-mediated mRNA decay</keyword>
<keyword id="KW-0539">Nucleus</keyword>
<keyword id="KW-1185">Reference proteome</keyword>
<keyword id="KW-0694">RNA-binding</keyword>
<keyword id="KW-0943">RNA-mediated gene silencing</keyword>
<keyword id="KW-0810">Translation regulation</keyword>
<keyword id="KW-0813">Transport</keyword>
<comment type="function">
    <text evidence="2">Component of the cap-binding complex (CBC), which binds co-transcriptionally to the 5' cap of pre-mRNAs and is involved in various processes such as pre-mRNA splicing, translation regulation, nonsense-mediated mRNA decay, RNA-mediated gene silencing (RNAi) by microRNAs (miRNAs) and mRNA export. The CBC complex is involved in mRNA export from the nucleus, leading to the recruitment of the mRNA export machinery to the 5' end of mRNA and to mRNA export in a 5' to 3' direction through the nuclear pore. The CBC complex is also involved in mediating U snRNA and intronless mRNAs export from the nucleus. The CBC complex is essential for a pioneer round of mRNA translation, before steady state translation when the CBC complex is replaced by cytoplasmic cap-binding protein eIF4E. The pioneer round of mRNA translation mediated by the CBC complex plays a central role in nonsense-mediated mRNA decay (NMD), NMD only taking place in mRNAs bound to the CBC complex, but not on eIF4E-bound mRNAs. The CBC complex enhances NMD in mRNAs containing at least one exon-junction complex (EJC), promoting the interaction between UPF1 and UPF2. The CBC complex is also involved in 'failsafe' NMD, which is independent of the EJC complex, while it does not participate in Staufen-mediated mRNA decay (SMD). During cell proliferation, the CBC complex is also involved in microRNAs (miRNAs) biogenesis via its interaction with SRRT/ARS2, thereby being required for miRNA-mediated RNA interference. The CBC complex also acts as a negative regulator of PARN, thereby acting as an inhibitor of mRNA deadenylation. In the CBC complex, NCBP2/CBP20 recognizes and binds capped RNAs (m7GpppG-capped RNA) but requires NCBP1/CBP80 to stabilize the movement of its N-terminal loop and lock the CBC into a high affinity cap-binding state with the cap structure. The conventional cap-binding complex with NCBP2 binds both small nuclear RNA (snRNA) and messenger (mRNA) and is involved in their export from the nucleus (By similarity).</text>
</comment>
<comment type="subunit">
    <text evidence="2">Component of the nuclear cap-binding complex (CBC), a heterodimer composed of NCBP1/CBP80 and NCBP2/CBP20 that interacts with m7GpppG-capped RNA.</text>
</comment>
<comment type="subcellular location">
    <subcellularLocation>
        <location evidence="2">Nucleus</location>
    </subcellularLocation>
    <subcellularLocation>
        <location evidence="2">Cytoplasm</location>
    </subcellularLocation>
</comment>
<comment type="similarity">
    <text evidence="4">Belongs to the RRM NCBP2 family.</text>
</comment>
<proteinExistence type="evidence at transcript level"/>
<protein>
    <recommendedName>
        <fullName>Nuclear cap-binding protein subunit 2</fullName>
    </recommendedName>
    <alternativeName>
        <fullName>20 kDa nuclear cap-binding protein</fullName>
    </alternativeName>
    <alternativeName>
        <fullName>NCBP 20 kDa subunit</fullName>
        <shortName>CBP20</shortName>
    </alternativeName>
</protein>
<accession>Q5ZKR5</accession>
<reference key="1">
    <citation type="journal article" date="2005" name="Genome Biol.">
        <title>Full-length cDNAs from chicken bursal lymphocytes to facilitate gene function analysis.</title>
        <authorList>
            <person name="Caldwell R.B."/>
            <person name="Kierzek A.M."/>
            <person name="Arakawa H."/>
            <person name="Bezzubov Y."/>
            <person name="Zaim J."/>
            <person name="Fiedler P."/>
            <person name="Kutter S."/>
            <person name="Blagodatski A."/>
            <person name="Kostovska D."/>
            <person name="Koter M."/>
            <person name="Plachy J."/>
            <person name="Carninci P."/>
            <person name="Hayashizaki Y."/>
            <person name="Buerstedde J.-M."/>
        </authorList>
    </citation>
    <scope>NUCLEOTIDE SEQUENCE [LARGE SCALE MRNA]</scope>
    <source>
        <strain>CB</strain>
        <tissue>Bursa of Fabricius</tissue>
    </source>
</reference>
<organism>
    <name type="scientific">Gallus gallus</name>
    <name type="common">Chicken</name>
    <dbReference type="NCBI Taxonomy" id="9031"/>
    <lineage>
        <taxon>Eukaryota</taxon>
        <taxon>Metazoa</taxon>
        <taxon>Chordata</taxon>
        <taxon>Craniata</taxon>
        <taxon>Vertebrata</taxon>
        <taxon>Euteleostomi</taxon>
        <taxon>Archelosauria</taxon>
        <taxon>Archosauria</taxon>
        <taxon>Dinosauria</taxon>
        <taxon>Saurischia</taxon>
        <taxon>Theropoda</taxon>
        <taxon>Coelurosauria</taxon>
        <taxon>Aves</taxon>
        <taxon>Neognathae</taxon>
        <taxon>Galloanserae</taxon>
        <taxon>Galliformes</taxon>
        <taxon>Phasianidae</taxon>
        <taxon>Phasianinae</taxon>
        <taxon>Gallus</taxon>
    </lineage>
</organism>
<feature type="chain" id="PRO_0000385249" description="Nuclear cap-binding protein subunit 2">
    <location>
        <begin position="1"/>
        <end position="168"/>
    </location>
</feature>
<feature type="domain" description="RRM" evidence="3">
    <location>
        <begin position="43"/>
        <end position="121"/>
    </location>
</feature>
<feature type="binding site" evidence="1">
    <location>
        <position position="23"/>
    </location>
    <ligand>
        <name>mRNA</name>
        <dbReference type="ChEBI" id="CHEBI:33699"/>
    </ligand>
    <ligandPart>
        <name>mRNA cap</name>
    </ligandPart>
</feature>
<feature type="binding site" evidence="1">
    <location>
        <position position="46"/>
    </location>
    <ligand>
        <name>mRNA</name>
        <dbReference type="ChEBI" id="CHEBI:33699"/>
    </ligand>
    <ligandPart>
        <name>mRNA cap</name>
    </ligandPart>
</feature>
<feature type="binding site" evidence="1">
    <location>
        <begin position="115"/>
        <end position="119"/>
    </location>
    <ligand>
        <name>mRNA</name>
        <dbReference type="ChEBI" id="CHEBI:33699"/>
    </ligand>
    <ligandPart>
        <name>mRNA cap</name>
    </ligandPart>
</feature>
<feature type="binding site" evidence="1">
    <location>
        <begin position="126"/>
        <end position="130"/>
    </location>
    <ligand>
        <name>mRNA</name>
        <dbReference type="ChEBI" id="CHEBI:33699"/>
    </ligand>
    <ligandPart>
        <name>mRNA cap</name>
    </ligandPart>
</feature>
<feature type="binding site" evidence="1">
    <location>
        <begin position="136"/>
        <end position="137"/>
    </location>
    <ligand>
        <name>mRNA</name>
        <dbReference type="ChEBI" id="CHEBI:33699"/>
    </ligand>
    <ligandPart>
        <name>mRNA cap</name>
    </ligandPart>
</feature>
<evidence type="ECO:0000250" key="1"/>
<evidence type="ECO:0000250" key="2">
    <source>
        <dbReference type="UniProtKB" id="P52298"/>
    </source>
</evidence>
<evidence type="ECO:0000255" key="3">
    <source>
        <dbReference type="PROSITE-ProRule" id="PRU00176"/>
    </source>
</evidence>
<evidence type="ECO:0000305" key="4"/>
<dbReference type="EMBL" id="AJ720019">
    <property type="protein sequence ID" value="CAG31678.1"/>
    <property type="molecule type" value="mRNA"/>
</dbReference>
<dbReference type="RefSeq" id="NP_001006430.1">
    <property type="nucleotide sequence ID" value="NM_001006430.1"/>
</dbReference>
<dbReference type="SMR" id="Q5ZKR5"/>
<dbReference type="FunCoup" id="Q5ZKR5">
    <property type="interactions" value="2490"/>
</dbReference>
<dbReference type="STRING" id="9031.ENSGALP00000009225"/>
<dbReference type="PaxDb" id="9031-ENSGALP00000009225"/>
<dbReference type="Ensembl" id="ENSGALT00010044772.1">
    <property type="protein sequence ID" value="ENSGALP00010026694.1"/>
    <property type="gene ID" value="ENSGALG00010018508.1"/>
</dbReference>
<dbReference type="GeneID" id="422214"/>
<dbReference type="KEGG" id="gga:422214"/>
<dbReference type="VEuPathDB" id="HostDB:LOC422214"/>
<dbReference type="eggNOG" id="KOG0121">
    <property type="taxonomic scope" value="Eukaryota"/>
</dbReference>
<dbReference type="GeneTree" id="ENSGT00390000003197"/>
<dbReference type="HOGENOM" id="CLU_070952_2_0_1"/>
<dbReference type="InParanoid" id="Q5ZKR5"/>
<dbReference type="OMA" id="DIRRIIM"/>
<dbReference type="OrthoDB" id="201398at2759"/>
<dbReference type="PhylomeDB" id="Q5ZKR5"/>
<dbReference type="TreeFam" id="TF313897"/>
<dbReference type="Reactome" id="R-GGA-111367">
    <property type="pathway name" value="SLBP independent Processing of Histone Pre-mRNAs"/>
</dbReference>
<dbReference type="Reactome" id="R-GGA-112382">
    <property type="pathway name" value="Formation of RNA Pol II elongation complex"/>
</dbReference>
<dbReference type="Reactome" id="R-GGA-113418">
    <property type="pathway name" value="Formation of the Early Elongation Complex"/>
</dbReference>
<dbReference type="Reactome" id="R-GGA-159227">
    <property type="pathway name" value="Transport of the SLBP independent Mature mRNA"/>
</dbReference>
<dbReference type="Reactome" id="R-GGA-159230">
    <property type="pathway name" value="Transport of the SLBP Dependant Mature mRNA"/>
</dbReference>
<dbReference type="Reactome" id="R-GGA-159236">
    <property type="pathway name" value="Transport of Mature mRNA derived from an Intron-Containing Transcript"/>
</dbReference>
<dbReference type="Reactome" id="R-GGA-674695">
    <property type="pathway name" value="RNA Polymerase II Pre-transcription Events"/>
</dbReference>
<dbReference type="Reactome" id="R-GGA-6803529">
    <property type="pathway name" value="FGFR2 alternative splicing"/>
</dbReference>
<dbReference type="Reactome" id="R-GGA-6807505">
    <property type="pathway name" value="RNA polymerase II transcribes snRNA genes"/>
</dbReference>
<dbReference type="Reactome" id="R-GGA-72086">
    <property type="pathway name" value="mRNA Capping"/>
</dbReference>
<dbReference type="Reactome" id="R-GGA-72163">
    <property type="pathway name" value="mRNA Splicing - Major Pathway"/>
</dbReference>
<dbReference type="Reactome" id="R-GGA-72165">
    <property type="pathway name" value="mRNA Splicing - Minor Pathway"/>
</dbReference>
<dbReference type="Reactome" id="R-GGA-72187">
    <property type="pathway name" value="mRNA 3'-end processing"/>
</dbReference>
<dbReference type="Reactome" id="R-GGA-72203">
    <property type="pathway name" value="Processing of Capped Intron-Containing Pre-mRNA"/>
</dbReference>
<dbReference type="Reactome" id="R-GGA-73856">
    <property type="pathway name" value="RNA Polymerase II Transcription Termination"/>
</dbReference>
<dbReference type="Reactome" id="R-GGA-77588">
    <property type="pathway name" value="SLBP Dependent Processing of Replication-Dependent Histone Pre-mRNAs"/>
</dbReference>
<dbReference type="Reactome" id="R-GGA-77595">
    <property type="pathway name" value="Processing of Intronless Pre-mRNAs"/>
</dbReference>
<dbReference type="Reactome" id="R-GGA-975956">
    <property type="pathway name" value="Nonsense Mediated Decay (NMD) independent of the Exon Junction Complex (EJC)"/>
</dbReference>
<dbReference type="Reactome" id="R-GGA-975957">
    <property type="pathway name" value="Nonsense Mediated Decay (NMD) enhanced by the Exon Junction Complex (EJC)"/>
</dbReference>
<dbReference type="PRO" id="PR:Q5ZKR5"/>
<dbReference type="Proteomes" id="UP000000539">
    <property type="component" value="Chromosome 4"/>
</dbReference>
<dbReference type="Bgee" id="ENSGALG00000005753">
    <property type="expression patterns" value="Expressed in testis and 13 other cell types or tissues"/>
</dbReference>
<dbReference type="GO" id="GO:0005737">
    <property type="term" value="C:cytoplasm"/>
    <property type="evidence" value="ECO:0007669"/>
    <property type="project" value="UniProtKB-SubCell"/>
</dbReference>
<dbReference type="GO" id="GO:0005846">
    <property type="term" value="C:nuclear cap binding complex"/>
    <property type="evidence" value="ECO:0000318"/>
    <property type="project" value="GO_Central"/>
</dbReference>
<dbReference type="GO" id="GO:0005634">
    <property type="term" value="C:nucleus"/>
    <property type="evidence" value="ECO:0007669"/>
    <property type="project" value="UniProtKB-SubCell"/>
</dbReference>
<dbReference type="GO" id="GO:0003729">
    <property type="term" value="F:mRNA binding"/>
    <property type="evidence" value="ECO:0000250"/>
    <property type="project" value="UniProtKB"/>
</dbReference>
<dbReference type="GO" id="GO:0000340">
    <property type="term" value="F:RNA 7-methylguanosine cap binding"/>
    <property type="evidence" value="ECO:0000250"/>
    <property type="project" value="UniProtKB"/>
</dbReference>
<dbReference type="GO" id="GO:0000339">
    <property type="term" value="F:RNA cap binding"/>
    <property type="evidence" value="ECO:0000318"/>
    <property type="project" value="GO_Central"/>
</dbReference>
<dbReference type="GO" id="GO:0017069">
    <property type="term" value="F:snRNA binding"/>
    <property type="evidence" value="ECO:0000250"/>
    <property type="project" value="UniProtKB"/>
</dbReference>
<dbReference type="GO" id="GO:0045292">
    <property type="term" value="P:mRNA cis splicing, via spliceosome"/>
    <property type="evidence" value="ECO:0000250"/>
    <property type="project" value="UniProtKB"/>
</dbReference>
<dbReference type="GO" id="GO:0000398">
    <property type="term" value="P:mRNA splicing, via spliceosome"/>
    <property type="evidence" value="ECO:0000318"/>
    <property type="project" value="GO_Central"/>
</dbReference>
<dbReference type="GO" id="GO:0051028">
    <property type="term" value="P:mRNA transport"/>
    <property type="evidence" value="ECO:0007669"/>
    <property type="project" value="UniProtKB-KW"/>
</dbReference>
<dbReference type="GO" id="GO:0000184">
    <property type="term" value="P:nuclear-transcribed mRNA catabolic process, nonsense-mediated decay"/>
    <property type="evidence" value="ECO:0007669"/>
    <property type="project" value="UniProtKB-KW"/>
</dbReference>
<dbReference type="GO" id="GO:0006417">
    <property type="term" value="P:regulation of translation"/>
    <property type="evidence" value="ECO:0007669"/>
    <property type="project" value="UniProtKB-KW"/>
</dbReference>
<dbReference type="GO" id="GO:0031047">
    <property type="term" value="P:regulatory ncRNA-mediated gene silencing"/>
    <property type="evidence" value="ECO:0007669"/>
    <property type="project" value="UniProtKB-KW"/>
</dbReference>
<dbReference type="CDD" id="cd12240">
    <property type="entry name" value="RRM_NCBP2"/>
    <property type="match status" value="1"/>
</dbReference>
<dbReference type="FunFam" id="3.30.70.330:FF:000128">
    <property type="entry name" value="Nuclear cap-binding protein subunit 2"/>
    <property type="match status" value="1"/>
</dbReference>
<dbReference type="Gene3D" id="3.30.70.330">
    <property type="match status" value="1"/>
</dbReference>
<dbReference type="InterPro" id="IPR027157">
    <property type="entry name" value="NCBP2"/>
</dbReference>
<dbReference type="InterPro" id="IPR034148">
    <property type="entry name" value="NCBP2_RRM"/>
</dbReference>
<dbReference type="InterPro" id="IPR012677">
    <property type="entry name" value="Nucleotide-bd_a/b_plait_sf"/>
</dbReference>
<dbReference type="InterPro" id="IPR035979">
    <property type="entry name" value="RBD_domain_sf"/>
</dbReference>
<dbReference type="InterPro" id="IPR000504">
    <property type="entry name" value="RRM_dom"/>
</dbReference>
<dbReference type="PANTHER" id="PTHR18847">
    <property type="entry name" value="20 KD NUCLEAR CAP BINDING PROTEIN"/>
    <property type="match status" value="1"/>
</dbReference>
<dbReference type="PANTHER" id="PTHR18847:SF4">
    <property type="entry name" value="NUCLEAR CAP-BINDING PROTEIN SUBUNIT 2"/>
    <property type="match status" value="1"/>
</dbReference>
<dbReference type="Pfam" id="PF00076">
    <property type="entry name" value="RRM_1"/>
    <property type="match status" value="1"/>
</dbReference>
<dbReference type="SMART" id="SM00360">
    <property type="entry name" value="RRM"/>
    <property type="match status" value="1"/>
</dbReference>
<dbReference type="SUPFAM" id="SSF54928">
    <property type="entry name" value="RNA-binding domain, RBD"/>
    <property type="match status" value="1"/>
</dbReference>
<dbReference type="PROSITE" id="PS50102">
    <property type="entry name" value="RRM"/>
    <property type="match status" value="1"/>
</dbReference>